<comment type="catalytic activity">
    <reaction evidence="1">
        <text>(S)-4-hydroxy-2-oxopentanoate = acetaldehyde + pyruvate</text>
        <dbReference type="Rhea" id="RHEA:22624"/>
        <dbReference type="ChEBI" id="CHEBI:15343"/>
        <dbReference type="ChEBI" id="CHEBI:15361"/>
        <dbReference type="ChEBI" id="CHEBI:73143"/>
        <dbReference type="EC" id="4.1.3.39"/>
    </reaction>
</comment>
<comment type="similarity">
    <text evidence="1">Belongs to the 4-hydroxy-2-oxovalerate aldolase family.</text>
</comment>
<feature type="chain" id="PRO_0000387912" description="4-hydroxy-2-oxovalerate aldolase 2">
    <location>
        <begin position="1"/>
        <end position="348"/>
    </location>
</feature>
<feature type="domain" description="Pyruvate carboxyltransferase" evidence="1">
    <location>
        <begin position="5"/>
        <end position="256"/>
    </location>
</feature>
<feature type="active site" description="Proton acceptor" evidence="1">
    <location>
        <position position="17"/>
    </location>
</feature>
<feature type="binding site" evidence="1">
    <location>
        <begin position="13"/>
        <end position="14"/>
    </location>
    <ligand>
        <name>substrate</name>
    </ligand>
</feature>
<feature type="binding site" evidence="1">
    <location>
        <position position="14"/>
    </location>
    <ligand>
        <name>Mn(2+)</name>
        <dbReference type="ChEBI" id="CHEBI:29035"/>
    </ligand>
</feature>
<feature type="binding site" evidence="1">
    <location>
        <position position="168"/>
    </location>
    <ligand>
        <name>substrate</name>
    </ligand>
</feature>
<feature type="binding site" evidence="1">
    <location>
        <position position="195"/>
    </location>
    <ligand>
        <name>Mn(2+)</name>
        <dbReference type="ChEBI" id="CHEBI:29035"/>
    </ligand>
</feature>
<feature type="binding site" evidence="1">
    <location>
        <position position="195"/>
    </location>
    <ligand>
        <name>substrate</name>
    </ligand>
</feature>
<feature type="binding site" evidence="1">
    <location>
        <position position="197"/>
    </location>
    <ligand>
        <name>Mn(2+)</name>
        <dbReference type="ChEBI" id="CHEBI:29035"/>
    </ligand>
</feature>
<feature type="site" description="Transition state stabilizer" evidence="1">
    <location>
        <position position="13"/>
    </location>
</feature>
<reference key="1">
    <citation type="submission" date="2007-10" db="EMBL/GenBank/DDBJ databases">
        <title>Complete sequence of Salinispora arenicola CNS-205.</title>
        <authorList>
            <consortium name="US DOE Joint Genome Institute"/>
            <person name="Copeland A."/>
            <person name="Lucas S."/>
            <person name="Lapidus A."/>
            <person name="Barry K."/>
            <person name="Glavina del Rio T."/>
            <person name="Dalin E."/>
            <person name="Tice H."/>
            <person name="Pitluck S."/>
            <person name="Foster B."/>
            <person name="Schmutz J."/>
            <person name="Larimer F."/>
            <person name="Land M."/>
            <person name="Hauser L."/>
            <person name="Kyrpides N."/>
            <person name="Ivanova N."/>
            <person name="Jensen P.R."/>
            <person name="Moore B.S."/>
            <person name="Penn K."/>
            <person name="Jenkins C."/>
            <person name="Udwary D."/>
            <person name="Xiang L."/>
            <person name="Gontang E."/>
            <person name="Richardson P."/>
        </authorList>
    </citation>
    <scope>NUCLEOTIDE SEQUENCE [LARGE SCALE GENOMIC DNA]</scope>
    <source>
        <strain>CNS-205</strain>
    </source>
</reference>
<keyword id="KW-0058">Aromatic hydrocarbons catabolism</keyword>
<keyword id="KW-0456">Lyase</keyword>
<keyword id="KW-0464">Manganese</keyword>
<keyword id="KW-0479">Metal-binding</keyword>
<name>HOA2_SALAI</name>
<sequence length="348" mass="36511">MSVKLQICDSTLRDGNHAVAHQLGRADISAYARAAEEAGVDVLEVGHGNGLGASSIQVGIAAVSDAEMLRAAKAELRNSRLGVLSIPGFASVERDLKPALDCGVDEVRVGAHCTEADVTRQQITMLRSMGVRVKGLLLMSHMASAGKLVEQAGLMQEYGAEAVVLMDSAGAYTPEMVREKVGELVEKLDIAIGFHAHNNLGLSVINSITAVRAGASIVDVTARGFGAGAGNAPIELVAANLHVEQIEARIKLFDALDAADTAEERFVKHVPTNDGVTIASGIAGVFSGFAAPVRRASRRFGVDPREILLELGRRRVVAGQEDTIIEVAMALAAEAASADLTHAFVDHI</sequence>
<dbReference type="EC" id="4.1.3.39" evidence="1"/>
<dbReference type="EMBL" id="CP000850">
    <property type="protein sequence ID" value="ABW00336.1"/>
    <property type="molecule type" value="Genomic_DNA"/>
</dbReference>
<dbReference type="SMR" id="A8M6W8"/>
<dbReference type="STRING" id="391037.Sare_4567"/>
<dbReference type="KEGG" id="saq:Sare_4567"/>
<dbReference type="PATRIC" id="fig|391037.6.peg.4615"/>
<dbReference type="eggNOG" id="COG0119">
    <property type="taxonomic scope" value="Bacteria"/>
</dbReference>
<dbReference type="HOGENOM" id="CLU_049173_0_0_11"/>
<dbReference type="OrthoDB" id="9803573at2"/>
<dbReference type="GO" id="GO:0003852">
    <property type="term" value="F:2-isopropylmalate synthase activity"/>
    <property type="evidence" value="ECO:0007669"/>
    <property type="project" value="TreeGrafter"/>
</dbReference>
<dbReference type="GO" id="GO:0008701">
    <property type="term" value="F:4-hydroxy-2-oxovalerate aldolase activity"/>
    <property type="evidence" value="ECO:0007669"/>
    <property type="project" value="UniProtKB-UniRule"/>
</dbReference>
<dbReference type="GO" id="GO:0030145">
    <property type="term" value="F:manganese ion binding"/>
    <property type="evidence" value="ECO:0007669"/>
    <property type="project" value="UniProtKB-UniRule"/>
</dbReference>
<dbReference type="GO" id="GO:0009056">
    <property type="term" value="P:catabolic process"/>
    <property type="evidence" value="ECO:0007669"/>
    <property type="project" value="UniProtKB-KW"/>
</dbReference>
<dbReference type="GO" id="GO:0009098">
    <property type="term" value="P:L-leucine biosynthetic process"/>
    <property type="evidence" value="ECO:0007669"/>
    <property type="project" value="TreeGrafter"/>
</dbReference>
<dbReference type="CDD" id="cd07943">
    <property type="entry name" value="DRE_TIM_HOA"/>
    <property type="match status" value="1"/>
</dbReference>
<dbReference type="Gene3D" id="1.10.8.60">
    <property type="match status" value="1"/>
</dbReference>
<dbReference type="Gene3D" id="3.20.20.70">
    <property type="entry name" value="Aldolase class I"/>
    <property type="match status" value="1"/>
</dbReference>
<dbReference type="HAMAP" id="MF_01656">
    <property type="entry name" value="HOA"/>
    <property type="match status" value="1"/>
</dbReference>
<dbReference type="InterPro" id="IPR050073">
    <property type="entry name" value="2-IPM_HCS-like"/>
</dbReference>
<dbReference type="InterPro" id="IPR017629">
    <property type="entry name" value="4OH_2_O-val_aldolase"/>
</dbReference>
<dbReference type="InterPro" id="IPR013785">
    <property type="entry name" value="Aldolase_TIM"/>
</dbReference>
<dbReference type="InterPro" id="IPR012425">
    <property type="entry name" value="DmpG_comm"/>
</dbReference>
<dbReference type="InterPro" id="IPR035685">
    <property type="entry name" value="DRE_TIM_HOA"/>
</dbReference>
<dbReference type="InterPro" id="IPR000891">
    <property type="entry name" value="PYR_CT"/>
</dbReference>
<dbReference type="NCBIfam" id="TIGR03217">
    <property type="entry name" value="4OH_2_O_val_ald"/>
    <property type="match status" value="1"/>
</dbReference>
<dbReference type="NCBIfam" id="NF006049">
    <property type="entry name" value="PRK08195.1"/>
    <property type="match status" value="1"/>
</dbReference>
<dbReference type="PANTHER" id="PTHR10277:SF9">
    <property type="entry name" value="2-ISOPROPYLMALATE SYNTHASE 1, CHLOROPLASTIC-RELATED"/>
    <property type="match status" value="1"/>
</dbReference>
<dbReference type="PANTHER" id="PTHR10277">
    <property type="entry name" value="HOMOCITRATE SYNTHASE-RELATED"/>
    <property type="match status" value="1"/>
</dbReference>
<dbReference type="Pfam" id="PF07836">
    <property type="entry name" value="DmpG_comm"/>
    <property type="match status" value="1"/>
</dbReference>
<dbReference type="Pfam" id="PF00682">
    <property type="entry name" value="HMGL-like"/>
    <property type="match status" value="1"/>
</dbReference>
<dbReference type="SUPFAM" id="SSF51569">
    <property type="entry name" value="Aldolase"/>
    <property type="match status" value="1"/>
</dbReference>
<dbReference type="SUPFAM" id="SSF89000">
    <property type="entry name" value="post-HMGL domain-like"/>
    <property type="match status" value="1"/>
</dbReference>
<dbReference type="PROSITE" id="PS50991">
    <property type="entry name" value="PYR_CT"/>
    <property type="match status" value="1"/>
</dbReference>
<organism>
    <name type="scientific">Salinispora arenicola (strain CNS-205)</name>
    <dbReference type="NCBI Taxonomy" id="391037"/>
    <lineage>
        <taxon>Bacteria</taxon>
        <taxon>Bacillati</taxon>
        <taxon>Actinomycetota</taxon>
        <taxon>Actinomycetes</taxon>
        <taxon>Micromonosporales</taxon>
        <taxon>Micromonosporaceae</taxon>
        <taxon>Salinispora</taxon>
    </lineage>
</organism>
<proteinExistence type="inferred from homology"/>
<gene>
    <name type="ordered locus">Sare_4567</name>
</gene>
<accession>A8M6W8</accession>
<protein>
    <recommendedName>
        <fullName evidence="1">4-hydroxy-2-oxovalerate aldolase 2</fullName>
        <shortName evidence="1">HOA 2</shortName>
        <ecNumber evidence="1">4.1.3.39</ecNumber>
    </recommendedName>
    <alternativeName>
        <fullName evidence="1">4-hydroxy-2-keto-pentanoic acid aldolase 2</fullName>
    </alternativeName>
    <alternativeName>
        <fullName evidence="1">4-hydroxy-2-oxopentanoate aldolase 2</fullName>
    </alternativeName>
</protein>
<evidence type="ECO:0000255" key="1">
    <source>
        <dbReference type="HAMAP-Rule" id="MF_01656"/>
    </source>
</evidence>